<protein>
    <recommendedName>
        <fullName evidence="1">Large ribosomal subunit protein bL36</fullName>
    </recommendedName>
    <alternativeName>
        <fullName evidence="2">50S ribosomal protein L36</fullName>
    </alternativeName>
</protein>
<feature type="chain" id="PRO_0000302220" description="Large ribosomal subunit protein bL36">
    <location>
        <begin position="1"/>
        <end position="38"/>
    </location>
</feature>
<proteinExistence type="inferred from homology"/>
<comment type="similarity">
    <text evidence="1">Belongs to the bacterial ribosomal protein bL36 family.</text>
</comment>
<name>RL36_LACAC</name>
<reference key="1">
    <citation type="journal article" date="2005" name="Proc. Natl. Acad. Sci. U.S.A.">
        <title>Complete genome sequence of the probiotic lactic acid bacterium Lactobacillus acidophilus NCFM.</title>
        <authorList>
            <person name="Altermann E."/>
            <person name="Russell W.M."/>
            <person name="Azcarate-Peril M.A."/>
            <person name="Barrangou R."/>
            <person name="Buck B.L."/>
            <person name="McAuliffe O."/>
            <person name="Souther N."/>
            <person name="Dobson A."/>
            <person name="Duong T."/>
            <person name="Callanan M."/>
            <person name="Lick S."/>
            <person name="Hamrick A."/>
            <person name="Cano R."/>
            <person name="Klaenhammer T.R."/>
        </authorList>
    </citation>
    <scope>NUCLEOTIDE SEQUENCE [LARGE SCALE GENOMIC DNA]</scope>
    <source>
        <strain>ATCC 700396 / NCK56 / N2 / NCFM</strain>
    </source>
</reference>
<evidence type="ECO:0000255" key="1">
    <source>
        <dbReference type="HAMAP-Rule" id="MF_00251"/>
    </source>
</evidence>
<evidence type="ECO:0000305" key="2"/>
<organism>
    <name type="scientific">Lactobacillus acidophilus (strain ATCC 700396 / NCK56 / N2 / NCFM)</name>
    <dbReference type="NCBI Taxonomy" id="272621"/>
    <lineage>
        <taxon>Bacteria</taxon>
        <taxon>Bacillati</taxon>
        <taxon>Bacillota</taxon>
        <taxon>Bacilli</taxon>
        <taxon>Lactobacillales</taxon>
        <taxon>Lactobacillaceae</taxon>
        <taxon>Lactobacillus</taxon>
    </lineage>
</organism>
<gene>
    <name evidence="1" type="primary">rpmJ</name>
    <name type="ordered locus">LBA0314</name>
</gene>
<keyword id="KW-1185">Reference proteome</keyword>
<keyword id="KW-0687">Ribonucleoprotein</keyword>
<keyword id="KW-0689">Ribosomal protein</keyword>
<dbReference type="EMBL" id="CP000033">
    <property type="protein sequence ID" value="AAV42206.1"/>
    <property type="molecule type" value="Genomic_DNA"/>
</dbReference>
<dbReference type="RefSeq" id="WP_002878160.1">
    <property type="nucleotide sequence ID" value="NC_006814.3"/>
</dbReference>
<dbReference type="RefSeq" id="YP_193237.1">
    <property type="nucleotide sequence ID" value="NC_006814.3"/>
</dbReference>
<dbReference type="SMR" id="Q5FM68"/>
<dbReference type="STRING" id="272621.LBA0314"/>
<dbReference type="GeneID" id="93290578"/>
<dbReference type="KEGG" id="lac:LBA0314"/>
<dbReference type="PATRIC" id="fig|272621.13.peg.300"/>
<dbReference type="eggNOG" id="COG0257">
    <property type="taxonomic scope" value="Bacteria"/>
</dbReference>
<dbReference type="HOGENOM" id="CLU_135723_6_2_9"/>
<dbReference type="OrthoDB" id="9802520at2"/>
<dbReference type="BioCyc" id="LACI272621:G1G49-308-MONOMER"/>
<dbReference type="Proteomes" id="UP000006381">
    <property type="component" value="Chromosome"/>
</dbReference>
<dbReference type="GO" id="GO:0005737">
    <property type="term" value="C:cytoplasm"/>
    <property type="evidence" value="ECO:0007669"/>
    <property type="project" value="UniProtKB-ARBA"/>
</dbReference>
<dbReference type="GO" id="GO:1990904">
    <property type="term" value="C:ribonucleoprotein complex"/>
    <property type="evidence" value="ECO:0007669"/>
    <property type="project" value="UniProtKB-KW"/>
</dbReference>
<dbReference type="GO" id="GO:0005840">
    <property type="term" value="C:ribosome"/>
    <property type="evidence" value="ECO:0007669"/>
    <property type="project" value="UniProtKB-KW"/>
</dbReference>
<dbReference type="GO" id="GO:0003735">
    <property type="term" value="F:structural constituent of ribosome"/>
    <property type="evidence" value="ECO:0007669"/>
    <property type="project" value="InterPro"/>
</dbReference>
<dbReference type="GO" id="GO:0006412">
    <property type="term" value="P:translation"/>
    <property type="evidence" value="ECO:0007669"/>
    <property type="project" value="UniProtKB-UniRule"/>
</dbReference>
<dbReference type="HAMAP" id="MF_00251">
    <property type="entry name" value="Ribosomal_bL36"/>
    <property type="match status" value="1"/>
</dbReference>
<dbReference type="InterPro" id="IPR000473">
    <property type="entry name" value="Ribosomal_bL36"/>
</dbReference>
<dbReference type="InterPro" id="IPR035977">
    <property type="entry name" value="Ribosomal_bL36_sp"/>
</dbReference>
<dbReference type="NCBIfam" id="TIGR01022">
    <property type="entry name" value="rpmJ_bact"/>
    <property type="match status" value="1"/>
</dbReference>
<dbReference type="PANTHER" id="PTHR42888">
    <property type="entry name" value="50S RIBOSOMAL PROTEIN L36, CHLOROPLASTIC"/>
    <property type="match status" value="1"/>
</dbReference>
<dbReference type="PANTHER" id="PTHR42888:SF1">
    <property type="entry name" value="LARGE RIBOSOMAL SUBUNIT PROTEIN BL36C"/>
    <property type="match status" value="1"/>
</dbReference>
<dbReference type="Pfam" id="PF00444">
    <property type="entry name" value="Ribosomal_L36"/>
    <property type="match status" value="1"/>
</dbReference>
<dbReference type="SUPFAM" id="SSF57840">
    <property type="entry name" value="Ribosomal protein L36"/>
    <property type="match status" value="1"/>
</dbReference>
<dbReference type="PROSITE" id="PS00828">
    <property type="entry name" value="RIBOSOMAL_L36"/>
    <property type="match status" value="1"/>
</dbReference>
<accession>Q5FM68</accession>
<sequence>MKVRPSVKPMCEHCKVIKRHGRVMVICPANPKHKQRQG</sequence>